<gene>
    <name evidence="1" type="primary">pdxJ</name>
    <name type="ordered locus">Gura_2729</name>
</gene>
<dbReference type="EC" id="2.6.99.2" evidence="1"/>
<dbReference type="EMBL" id="CP000698">
    <property type="protein sequence ID" value="ABQ26903.1"/>
    <property type="molecule type" value="Genomic_DNA"/>
</dbReference>
<dbReference type="RefSeq" id="WP_011939579.1">
    <property type="nucleotide sequence ID" value="NC_009483.1"/>
</dbReference>
<dbReference type="SMR" id="A5G535"/>
<dbReference type="STRING" id="351605.Gura_2729"/>
<dbReference type="KEGG" id="gur:Gura_2729"/>
<dbReference type="HOGENOM" id="CLU_074563_0_0_7"/>
<dbReference type="OrthoDB" id="9806590at2"/>
<dbReference type="UniPathway" id="UPA00244">
    <property type="reaction ID" value="UER00313"/>
</dbReference>
<dbReference type="Proteomes" id="UP000006695">
    <property type="component" value="Chromosome"/>
</dbReference>
<dbReference type="GO" id="GO:0005829">
    <property type="term" value="C:cytosol"/>
    <property type="evidence" value="ECO:0007669"/>
    <property type="project" value="TreeGrafter"/>
</dbReference>
<dbReference type="GO" id="GO:0033856">
    <property type="term" value="F:pyridoxine 5'-phosphate synthase activity"/>
    <property type="evidence" value="ECO:0007669"/>
    <property type="project" value="UniProtKB-EC"/>
</dbReference>
<dbReference type="GO" id="GO:0008615">
    <property type="term" value="P:pyridoxine biosynthetic process"/>
    <property type="evidence" value="ECO:0007669"/>
    <property type="project" value="UniProtKB-UniRule"/>
</dbReference>
<dbReference type="CDD" id="cd00003">
    <property type="entry name" value="PNPsynthase"/>
    <property type="match status" value="1"/>
</dbReference>
<dbReference type="FunFam" id="3.20.20.70:FF:000042">
    <property type="entry name" value="Pyridoxine 5'-phosphate synthase"/>
    <property type="match status" value="1"/>
</dbReference>
<dbReference type="Gene3D" id="3.20.20.70">
    <property type="entry name" value="Aldolase class I"/>
    <property type="match status" value="1"/>
</dbReference>
<dbReference type="HAMAP" id="MF_00279">
    <property type="entry name" value="PdxJ"/>
    <property type="match status" value="1"/>
</dbReference>
<dbReference type="InterPro" id="IPR013785">
    <property type="entry name" value="Aldolase_TIM"/>
</dbReference>
<dbReference type="InterPro" id="IPR004569">
    <property type="entry name" value="PyrdxlP_synth_PdxJ"/>
</dbReference>
<dbReference type="InterPro" id="IPR036130">
    <property type="entry name" value="Pyridoxine-5'_phos_synth"/>
</dbReference>
<dbReference type="NCBIfam" id="TIGR00559">
    <property type="entry name" value="pdxJ"/>
    <property type="match status" value="1"/>
</dbReference>
<dbReference type="NCBIfam" id="NF003623">
    <property type="entry name" value="PRK05265.1-1"/>
    <property type="match status" value="1"/>
</dbReference>
<dbReference type="NCBIfam" id="NF003625">
    <property type="entry name" value="PRK05265.1-3"/>
    <property type="match status" value="1"/>
</dbReference>
<dbReference type="NCBIfam" id="NF003627">
    <property type="entry name" value="PRK05265.1-5"/>
    <property type="match status" value="1"/>
</dbReference>
<dbReference type="PANTHER" id="PTHR30456">
    <property type="entry name" value="PYRIDOXINE 5'-PHOSPHATE SYNTHASE"/>
    <property type="match status" value="1"/>
</dbReference>
<dbReference type="PANTHER" id="PTHR30456:SF0">
    <property type="entry name" value="PYRIDOXINE 5'-PHOSPHATE SYNTHASE"/>
    <property type="match status" value="1"/>
</dbReference>
<dbReference type="Pfam" id="PF03740">
    <property type="entry name" value="PdxJ"/>
    <property type="match status" value="1"/>
</dbReference>
<dbReference type="SUPFAM" id="SSF63892">
    <property type="entry name" value="Pyridoxine 5'-phosphate synthase"/>
    <property type="match status" value="1"/>
</dbReference>
<protein>
    <recommendedName>
        <fullName evidence="1">Pyridoxine 5'-phosphate synthase</fullName>
        <shortName evidence="1">PNP synthase</shortName>
        <ecNumber evidence="1">2.6.99.2</ecNumber>
    </recommendedName>
</protein>
<feature type="chain" id="PRO_1000078819" description="Pyridoxine 5'-phosphate synthase">
    <location>
        <begin position="1"/>
        <end position="239"/>
    </location>
</feature>
<feature type="active site" description="Proton acceptor" evidence="1">
    <location>
        <position position="43"/>
    </location>
</feature>
<feature type="active site" description="Proton acceptor" evidence="1">
    <location>
        <position position="70"/>
    </location>
</feature>
<feature type="active site" description="Proton donor" evidence="1">
    <location>
        <position position="191"/>
    </location>
</feature>
<feature type="binding site" evidence="1">
    <location>
        <position position="7"/>
    </location>
    <ligand>
        <name>3-amino-2-oxopropyl phosphate</name>
        <dbReference type="ChEBI" id="CHEBI:57279"/>
    </ligand>
</feature>
<feature type="binding site" evidence="1">
    <location>
        <begin position="9"/>
        <end position="10"/>
    </location>
    <ligand>
        <name>1-deoxy-D-xylulose 5-phosphate</name>
        <dbReference type="ChEBI" id="CHEBI:57792"/>
    </ligand>
</feature>
<feature type="binding site" evidence="1">
    <location>
        <position position="18"/>
    </location>
    <ligand>
        <name>3-amino-2-oxopropyl phosphate</name>
        <dbReference type="ChEBI" id="CHEBI:57279"/>
    </ligand>
</feature>
<feature type="binding site" evidence="1">
    <location>
        <position position="45"/>
    </location>
    <ligand>
        <name>1-deoxy-D-xylulose 5-phosphate</name>
        <dbReference type="ChEBI" id="CHEBI:57792"/>
    </ligand>
</feature>
<feature type="binding site" evidence="1">
    <location>
        <position position="50"/>
    </location>
    <ligand>
        <name>1-deoxy-D-xylulose 5-phosphate</name>
        <dbReference type="ChEBI" id="CHEBI:57792"/>
    </ligand>
</feature>
<feature type="binding site" evidence="1">
    <location>
        <position position="100"/>
    </location>
    <ligand>
        <name>1-deoxy-D-xylulose 5-phosphate</name>
        <dbReference type="ChEBI" id="CHEBI:57792"/>
    </ligand>
</feature>
<feature type="binding site" evidence="1">
    <location>
        <position position="192"/>
    </location>
    <ligand>
        <name>3-amino-2-oxopropyl phosphate</name>
        <dbReference type="ChEBI" id="CHEBI:57279"/>
    </ligand>
</feature>
<feature type="binding site" evidence="1">
    <location>
        <begin position="213"/>
        <end position="214"/>
    </location>
    <ligand>
        <name>3-amino-2-oxopropyl phosphate</name>
        <dbReference type="ChEBI" id="CHEBI:57279"/>
    </ligand>
</feature>
<feature type="site" description="Transition state stabilizer" evidence="1">
    <location>
        <position position="151"/>
    </location>
</feature>
<evidence type="ECO:0000255" key="1">
    <source>
        <dbReference type="HAMAP-Rule" id="MF_00279"/>
    </source>
</evidence>
<proteinExistence type="inferred from homology"/>
<keyword id="KW-0963">Cytoplasm</keyword>
<keyword id="KW-0664">Pyridoxine biosynthesis</keyword>
<keyword id="KW-1185">Reference proteome</keyword>
<keyword id="KW-0808">Transferase</keyword>
<organism>
    <name type="scientific">Geotalea uraniireducens (strain Rf4)</name>
    <name type="common">Geobacter uraniireducens</name>
    <dbReference type="NCBI Taxonomy" id="351605"/>
    <lineage>
        <taxon>Bacteria</taxon>
        <taxon>Pseudomonadati</taxon>
        <taxon>Thermodesulfobacteriota</taxon>
        <taxon>Desulfuromonadia</taxon>
        <taxon>Geobacterales</taxon>
        <taxon>Geobacteraceae</taxon>
        <taxon>Geotalea</taxon>
    </lineage>
</organism>
<accession>A5G535</accession>
<comment type="function">
    <text evidence="1">Catalyzes the complicated ring closure reaction between the two acyclic compounds 1-deoxy-D-xylulose-5-phosphate (DXP) and 3-amino-2-oxopropyl phosphate (1-amino-acetone-3-phosphate or AAP) to form pyridoxine 5'-phosphate (PNP) and inorganic phosphate.</text>
</comment>
<comment type="catalytic activity">
    <reaction evidence="1">
        <text>3-amino-2-oxopropyl phosphate + 1-deoxy-D-xylulose 5-phosphate = pyridoxine 5'-phosphate + phosphate + 2 H2O + H(+)</text>
        <dbReference type="Rhea" id="RHEA:15265"/>
        <dbReference type="ChEBI" id="CHEBI:15377"/>
        <dbReference type="ChEBI" id="CHEBI:15378"/>
        <dbReference type="ChEBI" id="CHEBI:43474"/>
        <dbReference type="ChEBI" id="CHEBI:57279"/>
        <dbReference type="ChEBI" id="CHEBI:57792"/>
        <dbReference type="ChEBI" id="CHEBI:58589"/>
        <dbReference type="EC" id="2.6.99.2"/>
    </reaction>
</comment>
<comment type="pathway">
    <text evidence="1">Cofactor biosynthesis; pyridoxine 5'-phosphate biosynthesis; pyridoxine 5'-phosphate from D-erythrose 4-phosphate: step 5/5.</text>
</comment>
<comment type="subunit">
    <text evidence="1">Homooctamer; tetramer of dimers.</text>
</comment>
<comment type="subcellular location">
    <subcellularLocation>
        <location evidence="1">Cytoplasm</location>
    </subcellularLocation>
</comment>
<comment type="similarity">
    <text evidence="1">Belongs to the PNP synthase family.</text>
</comment>
<reference key="1">
    <citation type="submission" date="2007-05" db="EMBL/GenBank/DDBJ databases">
        <title>Complete sequence of Geobacter uraniireducens Rf4.</title>
        <authorList>
            <consortium name="US DOE Joint Genome Institute"/>
            <person name="Copeland A."/>
            <person name="Lucas S."/>
            <person name="Lapidus A."/>
            <person name="Barry K."/>
            <person name="Detter J.C."/>
            <person name="Glavina del Rio T."/>
            <person name="Hammon N."/>
            <person name="Israni S."/>
            <person name="Dalin E."/>
            <person name="Tice H."/>
            <person name="Pitluck S."/>
            <person name="Chertkov O."/>
            <person name="Brettin T."/>
            <person name="Bruce D."/>
            <person name="Han C."/>
            <person name="Schmutz J."/>
            <person name="Larimer F."/>
            <person name="Land M."/>
            <person name="Hauser L."/>
            <person name="Kyrpides N."/>
            <person name="Mikhailova N."/>
            <person name="Shelobolina E."/>
            <person name="Aklujkar M."/>
            <person name="Lovley D."/>
            <person name="Richardson P."/>
        </authorList>
    </citation>
    <scope>NUCLEOTIDE SEQUENCE [LARGE SCALE GENOMIC DNA]</scope>
    <source>
        <strain>ATCC BAA-1134 / JCM 13001 / Rf4</strain>
    </source>
</reference>
<name>PDXJ_GEOUR</name>
<sequence>MAKLGVNIDHVATIRQARGGVEPDPVAAAAIAELAGADGITIHLREDRRHIQDRDLKLLRQTVKTRLNLEMAATDEMVNIAISVKPDMCTLVPEKRQELTTEGGLDVRLNLESIKEAVQRLQDGGLIVSLFIDPDPDQIKAADKTGADYIEIHTGAFAEARDWKSEQAELAKIENAIKLAGKLGMGINAGHGLNYANIRKVAALGGIEEYNIGHSIISKAVLVGLDRAVRDMVDLVKYA</sequence>